<organism>
    <name type="scientific">African swine fever virus (isolate Pig/Kenya/KEN-50/1950)</name>
    <name type="common">ASFV</name>
    <dbReference type="NCBI Taxonomy" id="561445"/>
    <lineage>
        <taxon>Viruses</taxon>
        <taxon>Varidnaviria</taxon>
        <taxon>Bamfordvirae</taxon>
        <taxon>Nucleocytoviricota</taxon>
        <taxon>Pokkesviricetes</taxon>
        <taxon>Asfuvirales</taxon>
        <taxon>Asfarviridae</taxon>
        <taxon>Asfivirus</taxon>
        <taxon>African swine fever virus</taxon>
    </lineage>
</organism>
<evidence type="ECO:0000250" key="1">
    <source>
        <dbReference type="UniProtKB" id="P22776"/>
    </source>
</evidence>
<evidence type="ECO:0000305" key="2"/>
<name>CAPSH_ASFK5</name>
<protein>
    <recommendedName>
        <fullName>Major capsid protein</fullName>
        <shortName>MCP</shortName>
    </recommendedName>
    <alternativeName>
        <fullName>p72</fullName>
    </alternativeName>
    <alternativeName>
        <fullName>p73</fullName>
    </alternativeName>
</protein>
<accession>Q5IZJ5</accession>
<comment type="function">
    <text evidence="1">Capsid protein that self-assembles to form the pseudo-hexameric capsomers of the icosahedral capsid (By similarity). The capsid is constructed of 2760 pseudo-hexameric capsomers and 12 pentameric capsomers, with a T=277 symmetry, about 200 nm in diameter (By similarity). The capsid encapsulates the DNA-containing nucleoid, the core shell and the inner membrane (By similarity). Plays an essential role in virion assembly (By similarity). Involved in virus attachment to the host cell (By similarity).</text>
</comment>
<comment type="subunit">
    <text evidence="1">Homotrimer (By similarity). The membrane-bound form, but not the cytosolic one, assembles into large complexes (By similarity). Interacts with the minor capsid proteins M1249L and p17; these interactions form a rigid zipper structure that stabilizes the capsomers (By similarity).</text>
</comment>
<comment type="subcellular location">
    <subcellularLocation>
        <location evidence="1">Virion</location>
    </subcellularLocation>
    <subcellularLocation>
        <location>Host endoplasmic reticulum membrane</location>
        <topology evidence="1">Peripheral membrane protein</topology>
    </subcellularLocation>
    <subcellularLocation>
        <location evidence="1">Host cytoplasm</location>
        <location evidence="1">Host cytosol</location>
    </subcellularLocation>
    <text evidence="1">Present in the outer part of the capsid shell (By similarity). Localizes to the viral factory at 16 hpi (By similarity).</text>
</comment>
<comment type="induction">
    <text evidence="2">Expressed in the late phase of the viral replicative cycle.</text>
</comment>
<comment type="similarity">
    <text evidence="2">Belongs to the NCLDV major capsid protein family.</text>
</comment>
<sequence length="646" mass="73211">MASGGAFCLIANDGKADKIILAQDLLNSRISNIKNVNKSYGKPDPEPTLSQIEETHMVHFNAHFKPYVPIGFEYNKVRPHTGTPTLGNKLTFGIPQYGDFFHDMVGHHILGACHSSWQDAPIQGSSQMGAHGQLQTFPRNGYDWDNQTPLEGAVYTLVDPFGRPIVPGTKNAYRNLVYYCEYPGERLYENVRFDVNGNSLDEYSSDVTTLVRKFCIPGDKMTGYKHLVGQEVSVEGTSGPLLCNVQDMHKPHQSKPILTDENDTQRTCTHTNPKFLSQHFPENSHNIQTAGKQDITPITDATYLDIRRNVHYSCNGPQTPKYYQPPLALWIKLRFWFNENVNLAIPSVSIPFGERFITIKLASQKDLVNEFPGLFIRQSRFIPGRPSRRNIRFKPWFIPGVISEISLTNNELYINNLFVTPEIHNLFVKRVRFSLIRVHKTQVTHTNNNHHDEKLMSALKWPIEYMFIGLKPTWNISDQNPHQHRDWHKFGHVVNAIMQPTHHAEVSFQDRDTALPDACSSISDISPITYPITLPIIKNISVTAHGINLIDKFPSKFCSSYIPFHYGGNSIKTPDDPGAMMITFALKPREEYQPSGHINVSRAREFYISWDTDYVGSITTADLVVSASAINFLLLQNGSAVLRYST</sequence>
<keyword id="KW-0167">Capsid protein</keyword>
<keyword id="KW-1035">Host cytoplasm</keyword>
<keyword id="KW-1038">Host endoplasmic reticulum</keyword>
<keyword id="KW-1043">Host membrane</keyword>
<keyword id="KW-0945">Host-virus interaction</keyword>
<keyword id="KW-0426">Late protein</keyword>
<keyword id="KW-0472">Membrane</keyword>
<keyword id="KW-1161">Viral attachment to host cell</keyword>
<keyword id="KW-0946">Virion</keyword>
<keyword id="KW-1160">Virus entry into host cell</keyword>
<dbReference type="EMBL" id="AY261360">
    <property type="status" value="NOT_ANNOTATED_CDS"/>
    <property type="molecule type" value="Genomic_DNA"/>
</dbReference>
<dbReference type="EMBL" id="AY578698">
    <property type="protein sequence ID" value="AAT84447.1"/>
    <property type="molecule type" value="Genomic_DNA"/>
</dbReference>
<dbReference type="SMR" id="Q5IZJ5"/>
<dbReference type="Proteomes" id="UP000000861">
    <property type="component" value="Segment"/>
</dbReference>
<dbReference type="GO" id="GO:0044164">
    <property type="term" value="C:host cell cytosol"/>
    <property type="evidence" value="ECO:0007669"/>
    <property type="project" value="UniProtKB-SubCell"/>
</dbReference>
<dbReference type="GO" id="GO:0044167">
    <property type="term" value="C:host cell endoplasmic reticulum membrane"/>
    <property type="evidence" value="ECO:0007669"/>
    <property type="project" value="UniProtKB-SubCell"/>
</dbReference>
<dbReference type="GO" id="GO:0016020">
    <property type="term" value="C:membrane"/>
    <property type="evidence" value="ECO:0007669"/>
    <property type="project" value="UniProtKB-KW"/>
</dbReference>
<dbReference type="GO" id="GO:0019028">
    <property type="term" value="C:viral capsid"/>
    <property type="evidence" value="ECO:0007669"/>
    <property type="project" value="UniProtKB-KW"/>
</dbReference>
<dbReference type="GO" id="GO:0005198">
    <property type="term" value="F:structural molecule activity"/>
    <property type="evidence" value="ECO:0007669"/>
    <property type="project" value="InterPro"/>
</dbReference>
<dbReference type="GO" id="GO:0046718">
    <property type="term" value="P:symbiont entry into host cell"/>
    <property type="evidence" value="ECO:0007669"/>
    <property type="project" value="UniProtKB-KW"/>
</dbReference>
<dbReference type="GO" id="GO:0019062">
    <property type="term" value="P:virion attachment to host cell"/>
    <property type="evidence" value="ECO:0007669"/>
    <property type="project" value="UniProtKB-KW"/>
</dbReference>
<dbReference type="Gene3D" id="2.70.9.10">
    <property type="entry name" value="Adenovirus Type 2 Hexon, domain 4"/>
    <property type="match status" value="1"/>
</dbReference>
<dbReference type="Gene3D" id="2.70.9.20">
    <property type="entry name" value="Major capsid protein Vp54"/>
    <property type="match status" value="1"/>
</dbReference>
<dbReference type="InterPro" id="IPR007542">
    <property type="entry name" value="MCP_C"/>
</dbReference>
<dbReference type="InterPro" id="IPR038519">
    <property type="entry name" value="MCP_C_sf"/>
</dbReference>
<dbReference type="InterPro" id="IPR016112">
    <property type="entry name" value="VP_dsDNA_II"/>
</dbReference>
<dbReference type="Pfam" id="PF04451">
    <property type="entry name" value="Capsid_NCLDV"/>
    <property type="match status" value="1"/>
</dbReference>
<dbReference type="SUPFAM" id="SSF49749">
    <property type="entry name" value="Group II dsDNA viruses VP"/>
    <property type="match status" value="2"/>
</dbReference>
<proteinExistence type="inferred from homology"/>
<gene>
    <name type="ordered locus">Ken-093</name>
</gene>
<organismHost>
    <name type="scientific">Ornithodoros</name>
    <name type="common">relapsing fever ticks</name>
    <dbReference type="NCBI Taxonomy" id="6937"/>
</organismHost>
<organismHost>
    <name type="scientific">Phacochoerus aethiopicus</name>
    <name type="common">Warthog</name>
    <dbReference type="NCBI Taxonomy" id="85517"/>
</organismHost>
<organismHost>
    <name type="scientific">Phacochoerus africanus</name>
    <name type="common">Warthog</name>
    <dbReference type="NCBI Taxonomy" id="41426"/>
</organismHost>
<organismHost>
    <name type="scientific">Potamochoerus larvatus</name>
    <name type="common">Bushpig</name>
    <dbReference type="NCBI Taxonomy" id="273792"/>
</organismHost>
<organismHost>
    <name type="scientific">Sus scrofa</name>
    <name type="common">Pig</name>
    <dbReference type="NCBI Taxonomy" id="9823"/>
</organismHost>
<feature type="chain" id="PRO_0000373385" description="Major capsid protein">
    <location>
        <begin position="1"/>
        <end position="646"/>
    </location>
</feature>
<reference key="1">
    <citation type="journal article" date="2005" name="J. Clin. Microbiol.">
        <title>Preclinical diagnosis of African swine fever in contact-exposed swine by a real-time PCR assay.</title>
        <authorList>
            <person name="Zsak L."/>
            <person name="Borca M.V."/>
            <person name="Risatti G.R."/>
            <person name="Zsak A."/>
            <person name="French R.A."/>
            <person name="Lu Z."/>
            <person name="Kutish G.F."/>
            <person name="Neilan J.G."/>
            <person name="Callahan J.D."/>
            <person name="Nelson W.M."/>
            <person name="Rock D.L."/>
        </authorList>
    </citation>
    <scope>NUCLEOTIDE SEQUENCE [GENOMIC DNA]</scope>
</reference>
<reference key="2">
    <citation type="submission" date="2003-03" db="EMBL/GenBank/DDBJ databases">
        <title>African swine fever virus genomes.</title>
        <authorList>
            <person name="Kutish G.F."/>
            <person name="Rock D.L."/>
        </authorList>
    </citation>
    <scope>NUCLEOTIDE SEQUENCE [LARGE SCALE GENOMIC DNA]</scope>
</reference>